<protein>
    <recommendedName>
        <fullName>Protein IscX</fullName>
    </recommendedName>
</protein>
<comment type="function">
    <text evidence="1">May function as iron donor in the assembly of iron-sulfur clusters.</text>
</comment>
<comment type="subunit">
    <text evidence="1">Monomer.</text>
</comment>
<comment type="similarity">
    <text evidence="2">Belongs to the IscX family.</text>
</comment>
<evidence type="ECO:0000250" key="1"/>
<evidence type="ECO:0000305" key="2"/>
<accession>P0C0M1</accession>
<accession>P37096</accession>
<dbReference type="EMBL" id="AE005674">
    <property type="protein sequence ID" value="AAN44070.1"/>
    <property type="molecule type" value="Genomic_DNA"/>
</dbReference>
<dbReference type="EMBL" id="AE014073">
    <property type="protein sequence ID" value="AAP17895.1"/>
    <property type="molecule type" value="Genomic_DNA"/>
</dbReference>
<dbReference type="RefSeq" id="WP_000523616.1">
    <property type="nucleotide sequence ID" value="NZ_WPGW01000021.1"/>
</dbReference>
<dbReference type="BMRB" id="P0C0M1"/>
<dbReference type="SMR" id="P0C0M1"/>
<dbReference type="STRING" id="198214.SF2571"/>
<dbReference type="PaxDb" id="198214-SF2571"/>
<dbReference type="GeneID" id="93774612"/>
<dbReference type="KEGG" id="sfl:SF2571"/>
<dbReference type="KEGG" id="sfx:S2743"/>
<dbReference type="PATRIC" id="fig|198214.7.peg.3070"/>
<dbReference type="HOGENOM" id="CLU_168040_1_0_6"/>
<dbReference type="Proteomes" id="UP000001006">
    <property type="component" value="Chromosome"/>
</dbReference>
<dbReference type="Proteomes" id="UP000002673">
    <property type="component" value="Chromosome"/>
</dbReference>
<dbReference type="GO" id="GO:0005829">
    <property type="term" value="C:cytosol"/>
    <property type="evidence" value="ECO:0007669"/>
    <property type="project" value="TreeGrafter"/>
</dbReference>
<dbReference type="GO" id="GO:0008198">
    <property type="term" value="F:ferrous iron binding"/>
    <property type="evidence" value="ECO:0007669"/>
    <property type="project" value="TreeGrafter"/>
</dbReference>
<dbReference type="GO" id="GO:0016226">
    <property type="term" value="P:iron-sulfur cluster assembly"/>
    <property type="evidence" value="ECO:0007669"/>
    <property type="project" value="InterPro"/>
</dbReference>
<dbReference type="FunFam" id="1.10.10.600:FF:000001">
    <property type="entry name" value="Fe-S assembly protein IscX"/>
    <property type="match status" value="1"/>
</dbReference>
<dbReference type="Gene3D" id="1.10.10.600">
    <property type="entry name" value="IscX-like"/>
    <property type="match status" value="1"/>
</dbReference>
<dbReference type="InterPro" id="IPR007479">
    <property type="entry name" value="ISC_FeS_clus_asmbl_IscsX"/>
</dbReference>
<dbReference type="InterPro" id="IPR036762">
    <property type="entry name" value="IscX-like_sf"/>
</dbReference>
<dbReference type="NCBIfam" id="TIGR03412">
    <property type="entry name" value="iscX_yfhJ"/>
    <property type="match status" value="1"/>
</dbReference>
<dbReference type="PANTHER" id="PTHR37532">
    <property type="entry name" value="PROTEIN ISCX"/>
    <property type="match status" value="1"/>
</dbReference>
<dbReference type="PANTHER" id="PTHR37532:SF1">
    <property type="entry name" value="PROTEIN ISCX"/>
    <property type="match status" value="1"/>
</dbReference>
<dbReference type="Pfam" id="PF04384">
    <property type="entry name" value="Fe-S_assembly"/>
    <property type="match status" value="1"/>
</dbReference>
<dbReference type="PIRSF" id="PIRSF039003">
    <property type="entry name" value="IscX"/>
    <property type="match status" value="1"/>
</dbReference>
<dbReference type="SUPFAM" id="SSF140319">
    <property type="entry name" value="IscX-like"/>
    <property type="match status" value="1"/>
</dbReference>
<sequence>MGLKWTDSREIGEALYDAYPDLDPKTVRFTDMHQWICDLEDFDDDPQASNEKILEAILLVWLDEAE</sequence>
<feature type="chain" id="PRO_0000211856" description="Protein IscX">
    <location>
        <begin position="1"/>
        <end position="66"/>
    </location>
</feature>
<name>ISCX_SHIFL</name>
<gene>
    <name type="primary">iscX</name>
    <name type="ordered locus">SF2571</name>
    <name type="ordered locus">S2743</name>
</gene>
<organism>
    <name type="scientific">Shigella flexneri</name>
    <dbReference type="NCBI Taxonomy" id="623"/>
    <lineage>
        <taxon>Bacteria</taxon>
        <taxon>Pseudomonadati</taxon>
        <taxon>Pseudomonadota</taxon>
        <taxon>Gammaproteobacteria</taxon>
        <taxon>Enterobacterales</taxon>
        <taxon>Enterobacteriaceae</taxon>
        <taxon>Shigella</taxon>
    </lineage>
</organism>
<proteinExistence type="inferred from homology"/>
<reference key="1">
    <citation type="journal article" date="2002" name="Nucleic Acids Res.">
        <title>Genome sequence of Shigella flexneri 2a: insights into pathogenicity through comparison with genomes of Escherichia coli K12 and O157.</title>
        <authorList>
            <person name="Jin Q."/>
            <person name="Yuan Z."/>
            <person name="Xu J."/>
            <person name="Wang Y."/>
            <person name="Shen Y."/>
            <person name="Lu W."/>
            <person name="Wang J."/>
            <person name="Liu H."/>
            <person name="Yang J."/>
            <person name="Yang F."/>
            <person name="Zhang X."/>
            <person name="Zhang J."/>
            <person name="Yang G."/>
            <person name="Wu H."/>
            <person name="Qu D."/>
            <person name="Dong J."/>
            <person name="Sun L."/>
            <person name="Xue Y."/>
            <person name="Zhao A."/>
            <person name="Gao Y."/>
            <person name="Zhu J."/>
            <person name="Kan B."/>
            <person name="Ding K."/>
            <person name="Chen S."/>
            <person name="Cheng H."/>
            <person name="Yao Z."/>
            <person name="He B."/>
            <person name="Chen R."/>
            <person name="Ma D."/>
            <person name="Qiang B."/>
            <person name="Wen Y."/>
            <person name="Hou Y."/>
            <person name="Yu J."/>
        </authorList>
    </citation>
    <scope>NUCLEOTIDE SEQUENCE [LARGE SCALE GENOMIC DNA]</scope>
    <source>
        <strain>301 / Serotype 2a</strain>
    </source>
</reference>
<reference key="2">
    <citation type="journal article" date="2003" name="Infect. Immun.">
        <title>Complete genome sequence and comparative genomics of Shigella flexneri serotype 2a strain 2457T.</title>
        <authorList>
            <person name="Wei J."/>
            <person name="Goldberg M.B."/>
            <person name="Burland V."/>
            <person name="Venkatesan M.M."/>
            <person name="Deng W."/>
            <person name="Fournier G."/>
            <person name="Mayhew G.F."/>
            <person name="Plunkett G. III"/>
            <person name="Rose D.J."/>
            <person name="Darling A."/>
            <person name="Mau B."/>
            <person name="Perna N.T."/>
            <person name="Payne S.M."/>
            <person name="Runyen-Janecky L.J."/>
            <person name="Zhou S."/>
            <person name="Schwartz D.C."/>
            <person name="Blattner F.R."/>
        </authorList>
    </citation>
    <scope>NUCLEOTIDE SEQUENCE [LARGE SCALE GENOMIC DNA]</scope>
    <source>
        <strain>ATCC 700930 / 2457T / Serotype 2a</strain>
    </source>
</reference>
<keyword id="KW-1185">Reference proteome</keyword>